<dbReference type="EC" id="3.4.23.21"/>
<dbReference type="EMBL" id="L33859">
    <property type="protein sequence ID" value="AAB59306.1"/>
    <property type="molecule type" value="Genomic_DNA"/>
</dbReference>
<dbReference type="EMBL" id="L33858">
    <property type="protein sequence ID" value="AAB59305.1"/>
    <property type="molecule type" value="Genomic_DNA"/>
</dbReference>
<dbReference type="EMBL" id="J02651">
    <property type="protein sequence ID" value="AAA33879.1"/>
    <property type="molecule type" value="mRNA"/>
</dbReference>
<dbReference type="PIR" id="A26681">
    <property type="entry name" value="A26681"/>
</dbReference>
<dbReference type="PIR" id="A41415">
    <property type="entry name" value="A41415"/>
</dbReference>
<dbReference type="PDB" id="1UH7">
    <property type="method" value="X-ray"/>
    <property type="resolution" value="2.10 A"/>
    <property type="chains" value="A=69-392"/>
</dbReference>
<dbReference type="PDB" id="1UH8">
    <property type="method" value="X-ray"/>
    <property type="resolution" value="2.30 A"/>
    <property type="chains" value="A=69-392"/>
</dbReference>
<dbReference type="PDB" id="1UH9">
    <property type="method" value="X-ray"/>
    <property type="resolution" value="2.00 A"/>
    <property type="chains" value="A=69-392"/>
</dbReference>
<dbReference type="PDB" id="2APR">
    <property type="method" value="X-ray"/>
    <property type="resolution" value="1.80 A"/>
    <property type="chains" value="A=69-392"/>
</dbReference>
<dbReference type="PDB" id="3APR">
    <property type="method" value="X-ray"/>
    <property type="resolution" value="1.80 A"/>
    <property type="chains" value="E=69-392"/>
</dbReference>
<dbReference type="PDB" id="4APR">
    <property type="method" value="X-ray"/>
    <property type="resolution" value="2.50 A"/>
    <property type="chains" value="E=69-392"/>
</dbReference>
<dbReference type="PDB" id="5APR">
    <property type="method" value="X-ray"/>
    <property type="resolution" value="2.10 A"/>
    <property type="chains" value="E=69-392"/>
</dbReference>
<dbReference type="PDB" id="6APR">
    <property type="method" value="X-ray"/>
    <property type="resolution" value="2.50 A"/>
    <property type="chains" value="E=69-392"/>
</dbReference>
<dbReference type="PDB" id="8FXQ">
    <property type="method" value="X-ray"/>
    <property type="resolution" value="1.21 A"/>
    <property type="chains" value="A/B=65-393"/>
</dbReference>
<dbReference type="PDBsum" id="1UH7"/>
<dbReference type="PDBsum" id="1UH8"/>
<dbReference type="PDBsum" id="1UH9"/>
<dbReference type="PDBsum" id="2APR"/>
<dbReference type="PDBsum" id="3APR"/>
<dbReference type="PDBsum" id="4APR"/>
<dbReference type="PDBsum" id="5APR"/>
<dbReference type="PDBsum" id="6APR"/>
<dbReference type="PDBsum" id="8FXQ"/>
<dbReference type="SMR" id="P06026"/>
<dbReference type="BindingDB" id="P06026"/>
<dbReference type="ChEMBL" id="CHEMBL4253"/>
<dbReference type="MEROPS" id="A01.012"/>
<dbReference type="EvolutionaryTrace" id="P06026"/>
<dbReference type="GO" id="GO:0004190">
    <property type="term" value="F:aspartic-type endopeptidase activity"/>
    <property type="evidence" value="ECO:0007669"/>
    <property type="project" value="UniProtKB-KW"/>
</dbReference>
<dbReference type="GO" id="GO:0006508">
    <property type="term" value="P:proteolysis"/>
    <property type="evidence" value="ECO:0007669"/>
    <property type="project" value="UniProtKB-KW"/>
</dbReference>
<dbReference type="CDD" id="cd06097">
    <property type="entry name" value="Aspergillopepsin_like"/>
    <property type="match status" value="1"/>
</dbReference>
<dbReference type="FunFam" id="2.40.70.10:FF:000115">
    <property type="entry name" value="Lysosomal aspartic protease"/>
    <property type="match status" value="1"/>
</dbReference>
<dbReference type="Gene3D" id="2.40.70.10">
    <property type="entry name" value="Acid Proteases"/>
    <property type="match status" value="2"/>
</dbReference>
<dbReference type="InterPro" id="IPR001461">
    <property type="entry name" value="Aspartic_peptidase_A1"/>
</dbReference>
<dbReference type="InterPro" id="IPR001969">
    <property type="entry name" value="Aspartic_peptidase_AS"/>
</dbReference>
<dbReference type="InterPro" id="IPR034163">
    <property type="entry name" value="Aspergillopepsin-like_cat_dom"/>
</dbReference>
<dbReference type="InterPro" id="IPR033121">
    <property type="entry name" value="PEPTIDASE_A1"/>
</dbReference>
<dbReference type="InterPro" id="IPR021109">
    <property type="entry name" value="Peptidase_aspartic_dom_sf"/>
</dbReference>
<dbReference type="PANTHER" id="PTHR47966:SF1">
    <property type="entry name" value="ASPARTYL PROTEINASE"/>
    <property type="match status" value="1"/>
</dbReference>
<dbReference type="PANTHER" id="PTHR47966">
    <property type="entry name" value="BETA-SITE APP-CLEAVING ENZYME, ISOFORM A-RELATED"/>
    <property type="match status" value="1"/>
</dbReference>
<dbReference type="Pfam" id="PF00026">
    <property type="entry name" value="Asp"/>
    <property type="match status" value="1"/>
</dbReference>
<dbReference type="PRINTS" id="PR00792">
    <property type="entry name" value="PEPSIN"/>
</dbReference>
<dbReference type="SUPFAM" id="SSF50630">
    <property type="entry name" value="Acid proteases"/>
    <property type="match status" value="1"/>
</dbReference>
<dbReference type="PROSITE" id="PS00141">
    <property type="entry name" value="ASP_PROTEASE"/>
    <property type="match status" value="2"/>
</dbReference>
<dbReference type="PROSITE" id="PS51767">
    <property type="entry name" value="PEPTIDASE_A1"/>
    <property type="match status" value="1"/>
</dbReference>
<sequence>MKFTLISSCIAIAALAVAVDAAPGEKKISIPLAKNPNYKPSAKNAIQKAIAKYNKHKINTSTGGIVPDAGVGTVPMTDYGNDVEYYGQVTIGTPGKKFNLDFDTGSSDLWIASTLCTNCGSRQTKYDPKQSSTYQADGRTWSISYGDGSSASGILAKDNVNLGGLLIKGQTIELAKREAASFANGPNDGLLGLGFDTITTVRGVKTPMDNLISQGLISRPIFGVYLGKASNGGGGEYIFGGYDSTKFKGSLTTVPIDNSRGWWGITVDRATVGTSTVASSFDGILDTGTTLLILPNNVAASVARAYGASDNGDGTYTISCDTSRFKPLVFSINGASFQVSPDSLVFEEYQGQCIAGFGYGNFDFAIIGDTFLKNNYVVFNQGVPEVQIAPVAQ</sequence>
<evidence type="ECO:0000255" key="1"/>
<evidence type="ECO:0000255" key="2">
    <source>
        <dbReference type="PROSITE-ProRule" id="PRU01103"/>
    </source>
</evidence>
<evidence type="ECO:0000255" key="3">
    <source>
        <dbReference type="PROSITE-ProRule" id="PRU10094"/>
    </source>
</evidence>
<evidence type="ECO:0000305" key="4"/>
<evidence type="ECO:0000305" key="5">
    <source>
    </source>
</evidence>
<evidence type="ECO:0007829" key="6">
    <source>
        <dbReference type="PDB" id="2APR"/>
    </source>
</evidence>
<evidence type="ECO:0007829" key="7">
    <source>
        <dbReference type="PDB" id="4APR"/>
    </source>
</evidence>
<evidence type="ECO:0007829" key="8">
    <source>
        <dbReference type="PDB" id="8FXQ"/>
    </source>
</evidence>
<feature type="signal peptide" evidence="1">
    <location>
        <begin position="1"/>
        <end position="21"/>
    </location>
</feature>
<feature type="propeptide" id="PRO_0000025881" description="Activation peptide" evidence="5">
    <location>
        <begin position="22"/>
        <end position="68"/>
    </location>
</feature>
<feature type="chain" id="PRO_0000025882" description="Rhizopuspepsin">
    <location>
        <begin position="69"/>
        <end position="393"/>
    </location>
</feature>
<feature type="domain" description="Peptidase A1" evidence="2">
    <location>
        <begin position="85"/>
        <end position="389"/>
    </location>
</feature>
<feature type="active site" evidence="3">
    <location>
        <position position="103"/>
    </location>
</feature>
<feature type="active site" evidence="3">
    <location>
        <position position="286"/>
    </location>
</feature>
<feature type="disulfide bond">
    <location>
        <begin position="116"/>
        <end position="119"/>
    </location>
</feature>
<feature type="disulfide bond">
    <location>
        <begin position="320"/>
        <end position="353"/>
    </location>
</feature>
<feature type="sequence variant">
    <original>V</original>
    <variation>I</variation>
    <location>
        <position position="83"/>
    </location>
</feature>
<feature type="sequence variant">
    <original>K</original>
    <variation>N</variation>
    <location>
        <position position="129"/>
    </location>
</feature>
<feature type="sequence variant">
    <original>N</original>
    <variation>S</variation>
    <location>
        <position position="184"/>
    </location>
</feature>
<feature type="sequence variant">
    <original>S</original>
    <variation>K</variation>
    <location>
        <position position="230"/>
    </location>
</feature>
<feature type="sequence variant">
    <original>V</original>
    <variation>I</variation>
    <location>
        <position position="298"/>
    </location>
</feature>
<feature type="sequence variant">
    <original>S</original>
    <variation>Y</variation>
    <location>
        <position position="309"/>
    </location>
</feature>
<feature type="sequence variant">
    <original>N</original>
    <variation>D</variation>
    <location>
        <position position="361"/>
    </location>
</feature>
<feature type="sequence variant">
    <original>Q</original>
    <variation>E</variation>
    <location>
        <position position="393"/>
    </location>
</feature>
<feature type="strand" evidence="8">
    <location>
        <begin position="72"/>
        <end position="79"/>
    </location>
</feature>
<feature type="turn" evidence="8">
    <location>
        <begin position="80"/>
        <end position="83"/>
    </location>
</feature>
<feature type="strand" evidence="8">
    <location>
        <begin position="84"/>
        <end position="91"/>
    </location>
</feature>
<feature type="turn" evidence="8">
    <location>
        <begin position="92"/>
        <end position="95"/>
    </location>
</feature>
<feature type="strand" evidence="8">
    <location>
        <begin position="96"/>
        <end position="103"/>
    </location>
</feature>
<feature type="strand" evidence="8">
    <location>
        <begin position="110"/>
        <end position="113"/>
    </location>
</feature>
<feature type="strand" evidence="7">
    <location>
        <begin position="121"/>
        <end position="123"/>
    </location>
</feature>
<feature type="helix" evidence="8">
    <location>
        <begin position="128"/>
        <end position="130"/>
    </location>
</feature>
<feature type="strand" evidence="8">
    <location>
        <begin position="135"/>
        <end position="144"/>
    </location>
</feature>
<feature type="strand" evidence="8">
    <location>
        <begin position="150"/>
        <end position="162"/>
    </location>
</feature>
<feature type="strand" evidence="8">
    <location>
        <begin position="165"/>
        <end position="178"/>
    </location>
</feature>
<feature type="helix" evidence="8">
    <location>
        <begin position="180"/>
        <end position="183"/>
    </location>
</feature>
<feature type="strand" evidence="8">
    <location>
        <begin position="188"/>
        <end position="192"/>
    </location>
</feature>
<feature type="helix" evidence="8">
    <location>
        <begin position="196"/>
        <end position="198"/>
    </location>
</feature>
<feature type="helix" evidence="8">
    <location>
        <begin position="207"/>
        <end position="213"/>
    </location>
</feature>
<feature type="strand" evidence="8">
    <location>
        <begin position="221"/>
        <end position="226"/>
    </location>
</feature>
<feature type="helix" evidence="8">
    <location>
        <begin position="229"/>
        <end position="231"/>
    </location>
</feature>
<feature type="strand" evidence="8">
    <location>
        <begin position="235"/>
        <end position="239"/>
    </location>
</feature>
<feature type="helix" evidence="8">
    <location>
        <begin position="244"/>
        <end position="246"/>
    </location>
</feature>
<feature type="strand" evidence="8">
    <location>
        <begin position="252"/>
        <end position="255"/>
    </location>
</feature>
<feature type="strand" evidence="8">
    <location>
        <begin position="264"/>
        <end position="267"/>
    </location>
</feature>
<feature type="strand" evidence="8">
    <location>
        <begin position="269"/>
        <end position="272"/>
    </location>
</feature>
<feature type="strand" evidence="8">
    <location>
        <begin position="275"/>
        <end position="278"/>
    </location>
</feature>
<feature type="strand" evidence="8">
    <location>
        <begin position="281"/>
        <end position="285"/>
    </location>
</feature>
<feature type="strand" evidence="8">
    <location>
        <begin position="289"/>
        <end position="294"/>
    </location>
</feature>
<feature type="helix" evidence="8">
    <location>
        <begin position="296"/>
        <end position="306"/>
    </location>
</feature>
<feature type="strand" evidence="8">
    <location>
        <begin position="312"/>
        <end position="314"/>
    </location>
</feature>
<feature type="strand" evidence="8">
    <location>
        <begin position="316"/>
        <end position="318"/>
    </location>
</feature>
<feature type="helix" evidence="6">
    <location>
        <begin position="322"/>
        <end position="324"/>
    </location>
</feature>
<feature type="strand" evidence="8">
    <location>
        <begin position="328"/>
        <end position="332"/>
    </location>
</feature>
<feature type="strand" evidence="8">
    <location>
        <begin position="335"/>
        <end position="339"/>
    </location>
</feature>
<feature type="helix" evidence="8">
    <location>
        <begin position="341"/>
        <end position="344"/>
    </location>
</feature>
<feature type="strand" evidence="8">
    <location>
        <begin position="345"/>
        <end position="349"/>
    </location>
</feature>
<feature type="strand" evidence="8">
    <location>
        <begin position="352"/>
        <end position="359"/>
    </location>
</feature>
<feature type="strand" evidence="8">
    <location>
        <begin position="363"/>
        <end position="367"/>
    </location>
</feature>
<feature type="helix" evidence="8">
    <location>
        <begin position="369"/>
        <end position="372"/>
    </location>
</feature>
<feature type="strand" evidence="8">
    <location>
        <begin position="375"/>
        <end position="380"/>
    </location>
</feature>
<feature type="turn" evidence="8">
    <location>
        <begin position="381"/>
        <end position="384"/>
    </location>
</feature>
<feature type="strand" evidence="8">
    <location>
        <begin position="385"/>
        <end position="391"/>
    </location>
</feature>
<protein>
    <recommendedName>
        <fullName>Rhizopuspepsin</fullName>
        <ecNumber>3.4.23.21</ecNumber>
    </recommendedName>
</protein>
<name>CARP_RHICH</name>
<organism>
    <name type="scientific">Rhizopus chinensis</name>
    <name type="common">Bread mold</name>
    <dbReference type="NCBI Taxonomy" id="4843"/>
    <lineage>
        <taxon>Eukaryota</taxon>
        <taxon>Fungi</taxon>
        <taxon>Fungi incertae sedis</taxon>
        <taxon>Mucoromycota</taxon>
        <taxon>Mucoromycotina</taxon>
        <taxon>Mucoromycetes</taxon>
        <taxon>Mucorales</taxon>
        <taxon>Mucorineae</taxon>
        <taxon>Rhizopodaceae</taxon>
        <taxon>Rhizopus</taxon>
    </lineage>
</organism>
<reference key="1">
    <citation type="submission" date="1995-06" db="EMBL/GenBank/DDBJ databases">
        <authorList>
            <person name="Gregoli P.A."/>
            <person name="Delaney R."/>
        </authorList>
    </citation>
    <scope>NUCLEOTIDE SEQUENCE</scope>
</reference>
<reference key="2">
    <citation type="journal article" date="1987" name="J. Biol. Chem.">
        <title>Amino acid sequence of rhizopuspepsin isozyme pI 5.</title>
        <authorList>
            <person name="Delaney R."/>
            <person name="Wong R.N.S."/>
            <person name="Meng G.-Z."/>
            <person name="Wu N.-H."/>
            <person name="Tang J."/>
        </authorList>
    </citation>
    <scope>NUCLEOTIDE SEQUENCE [MRNA] OF 42-393</scope>
</reference>
<reference key="3">
    <citation type="journal article" date="1987" name="J. Biol. Chem.">
        <title>The amino acid sequence of rhizopuspepsin, an aspartic proteinase from Rhizopus chinensis.</title>
        <authorList>
            <person name="Takahashi K."/>
        </authorList>
    </citation>
    <scope>PROTEIN SEQUENCE OF 69-393</scope>
</reference>
<reference key="4">
    <citation type="journal article" date="1977" name="Proc. Natl. Acad. Sci. U.S.A.">
        <title>Homology among acid proteases: comparison of crystal structures at 3-A resolution of acid proteases from Rhizopus chinensis and Endothia parasitica.</title>
        <authorList>
            <person name="Subramanian E."/>
            <person name="Swan I.D.A."/>
            <person name="Liu M."/>
            <person name="Davies D.R."/>
            <person name="Jenkins J.A."/>
            <person name="Tickle I.J."/>
            <person name="Blundell T.L."/>
        </authorList>
    </citation>
    <scope>X-RAY CRYSTALLOGRAPHY (3.0 ANGSTROMS) OF 69-392</scope>
</reference>
<reference key="5">
    <citation type="journal article" date="1987" name="J. Mol. Biol.">
        <title>Structure and refinement at 1.8-A resolution of the aspartic proteinase from Rhizopus chinensis.</title>
        <authorList>
            <person name="Suguna K."/>
            <person name="Bott R.R."/>
            <person name="Padlan E.A."/>
            <person name="Subramanian E."/>
            <person name="Sheriff S."/>
            <person name="Cohen G.H."/>
            <person name="Davies D.R."/>
        </authorList>
    </citation>
    <scope>X-RAY CRYSTALLOGRAPHY (1.8 ANGSTROMS) OF 69-392</scope>
</reference>
<accession>P06026</accession>
<comment type="catalytic activity">
    <reaction>
        <text>Hydrolysis of proteins with broad specificity similar to that of pepsin A, preferring hydrophobic residues at P1 and P1'. Clots milk and activates trypsinogen. Does not cleave 4-Gln-|-His-5, but does cleave 10-His-|-Leu-11 and 12-Val-|-Glu-13 in B chain of insulin.</text>
        <dbReference type="EC" id="3.4.23.21"/>
    </reaction>
</comment>
<comment type="similarity">
    <text evidence="4">Belongs to the peptidase A1 family.</text>
</comment>
<proteinExistence type="evidence at protein level"/>
<keyword id="KW-0002">3D-structure</keyword>
<keyword id="KW-0064">Aspartyl protease</keyword>
<keyword id="KW-0903">Direct protein sequencing</keyword>
<keyword id="KW-1015">Disulfide bond</keyword>
<keyword id="KW-0378">Hydrolase</keyword>
<keyword id="KW-0645">Protease</keyword>
<keyword id="KW-0732">Signal</keyword>
<keyword id="KW-0865">Zymogen</keyword>